<organism>
    <name type="scientific">Physcomitrium patens</name>
    <name type="common">Spreading-leaved earth moss</name>
    <name type="synonym">Physcomitrella patens</name>
    <dbReference type="NCBI Taxonomy" id="3218"/>
    <lineage>
        <taxon>Eukaryota</taxon>
        <taxon>Viridiplantae</taxon>
        <taxon>Streptophyta</taxon>
        <taxon>Embryophyta</taxon>
        <taxon>Bryophyta</taxon>
        <taxon>Bryophytina</taxon>
        <taxon>Bryopsida</taxon>
        <taxon>Funariidae</taxon>
        <taxon>Funariales</taxon>
        <taxon>Funariaceae</taxon>
        <taxon>Physcomitrium</taxon>
    </lineage>
</organism>
<protein>
    <recommendedName>
        <fullName>CASP-like protein 1U2</fullName>
        <shortName>PpCASPL1U2</shortName>
    </recommendedName>
</protein>
<feature type="chain" id="PRO_0000370726" description="CASP-like protein 1U2">
    <location>
        <begin position="1"/>
        <end position="200"/>
    </location>
</feature>
<feature type="topological domain" description="Cytoplasmic" evidence="2">
    <location>
        <begin position="1"/>
        <end position="33"/>
    </location>
</feature>
<feature type="transmembrane region" description="Helical" evidence="2">
    <location>
        <begin position="34"/>
        <end position="54"/>
    </location>
</feature>
<feature type="topological domain" description="Extracellular" evidence="2">
    <location>
        <begin position="55"/>
        <end position="77"/>
    </location>
</feature>
<feature type="transmembrane region" description="Helical" evidence="2">
    <location>
        <begin position="78"/>
        <end position="98"/>
    </location>
</feature>
<feature type="topological domain" description="Cytoplasmic" evidence="2">
    <location>
        <begin position="99"/>
        <end position="120"/>
    </location>
</feature>
<feature type="transmembrane region" description="Helical" evidence="2">
    <location>
        <begin position="121"/>
        <end position="141"/>
    </location>
</feature>
<feature type="topological domain" description="Extracellular" evidence="2">
    <location>
        <begin position="142"/>
        <end position="168"/>
    </location>
</feature>
<feature type="transmembrane region" description="Helical" evidence="2">
    <location>
        <begin position="169"/>
        <end position="189"/>
    </location>
</feature>
<feature type="topological domain" description="Cytoplasmic" evidence="2">
    <location>
        <begin position="190"/>
        <end position="200"/>
    </location>
</feature>
<accession>A9STS7</accession>
<gene>
    <name type="ORF">PHYPADRAFT_58644</name>
</gene>
<dbReference type="EMBL" id="DS545007">
    <property type="protein sequence ID" value="EDQ65382.1"/>
    <property type="molecule type" value="Genomic_DNA"/>
</dbReference>
<dbReference type="EMBL" id="DC923681">
    <property type="status" value="NOT_ANNOTATED_CDS"/>
    <property type="molecule type" value="mRNA"/>
</dbReference>
<dbReference type="RefSeq" id="XP_001769820.1">
    <property type="nucleotide sequence ID" value="XM_001769768.1"/>
</dbReference>
<dbReference type="SMR" id="A9STS7"/>
<dbReference type="FunCoup" id="A9STS7">
    <property type="interactions" value="255"/>
</dbReference>
<dbReference type="PaxDb" id="3218-PP1S118_36V6.2"/>
<dbReference type="EnsemblPlants" id="Pp3c12_23940V3.1">
    <property type="protein sequence ID" value="Pp3c12_23940V3.1"/>
    <property type="gene ID" value="Pp3c12_23940"/>
</dbReference>
<dbReference type="EnsemblPlants" id="Pp3c12_23940V3.2">
    <property type="protein sequence ID" value="Pp3c12_23940V3.2"/>
    <property type="gene ID" value="Pp3c12_23940"/>
</dbReference>
<dbReference type="EnsemblPlants" id="Pp3c12_23940V3.3">
    <property type="protein sequence ID" value="Pp3c12_23940V3.3"/>
    <property type="gene ID" value="Pp3c12_23940"/>
</dbReference>
<dbReference type="Gramene" id="Pp3c12_23940V3.1">
    <property type="protein sequence ID" value="Pp3c12_23940V3.1"/>
    <property type="gene ID" value="Pp3c12_23940"/>
</dbReference>
<dbReference type="Gramene" id="Pp3c12_23940V3.2">
    <property type="protein sequence ID" value="Pp3c12_23940V3.2"/>
    <property type="gene ID" value="Pp3c12_23940"/>
</dbReference>
<dbReference type="Gramene" id="Pp3c12_23940V3.3">
    <property type="protein sequence ID" value="Pp3c12_23940V3.3"/>
    <property type="gene ID" value="Pp3c12_23940"/>
</dbReference>
<dbReference type="eggNOG" id="ENOG502RXTK">
    <property type="taxonomic scope" value="Eukaryota"/>
</dbReference>
<dbReference type="HOGENOM" id="CLU_066104_3_0_1"/>
<dbReference type="InParanoid" id="A9STS7"/>
<dbReference type="OMA" id="ENINDHR"/>
<dbReference type="OrthoDB" id="1906221at2759"/>
<dbReference type="Proteomes" id="UP000006727">
    <property type="component" value="Chromosome 12"/>
</dbReference>
<dbReference type="GO" id="GO:0005886">
    <property type="term" value="C:plasma membrane"/>
    <property type="evidence" value="ECO:0007669"/>
    <property type="project" value="UniProtKB-SubCell"/>
</dbReference>
<dbReference type="InterPro" id="IPR006459">
    <property type="entry name" value="CASP/CASPL"/>
</dbReference>
<dbReference type="InterPro" id="IPR006702">
    <property type="entry name" value="CASP_dom"/>
</dbReference>
<dbReference type="NCBIfam" id="TIGR01569">
    <property type="entry name" value="A_tha_TIGR01569"/>
    <property type="match status" value="1"/>
</dbReference>
<dbReference type="PANTHER" id="PTHR33573:SF47">
    <property type="entry name" value="CASP-LIKE PROTEIN 1U1"/>
    <property type="match status" value="1"/>
</dbReference>
<dbReference type="PANTHER" id="PTHR33573">
    <property type="entry name" value="CASP-LIKE PROTEIN 4A4"/>
    <property type="match status" value="1"/>
</dbReference>
<dbReference type="Pfam" id="PF04535">
    <property type="entry name" value="CASP_dom"/>
    <property type="match status" value="1"/>
</dbReference>
<sequence>MAEPVIVVPRKGVYSDDSYHHHHRHHSFHSCTNFLLRTLTAGATAAAVVVMLISTQTSGTIYGYFRGRWRDYPAYKWLIIANAVVFVYSVMAAIVACFSVIARRGPLSYSPSAWLTLLVDFLAASALISAASAALAVALLARNGQDLQGTHYWPTVCNYVSKFCDYTQGAIIASFVGFGLLFLSTLLAASALYHLSHRRH</sequence>
<name>CSPL3_PHYPA</name>
<keyword id="KW-1003">Cell membrane</keyword>
<keyword id="KW-0472">Membrane</keyword>
<keyword id="KW-1185">Reference proteome</keyword>
<keyword id="KW-0812">Transmembrane</keyword>
<keyword id="KW-1133">Transmembrane helix</keyword>
<reference key="1">
    <citation type="journal article" date="2008" name="Science">
        <title>The Physcomitrella genome reveals evolutionary insights into the conquest of land by plants.</title>
        <authorList>
            <person name="Rensing S.A."/>
            <person name="Lang D."/>
            <person name="Zimmer A.D."/>
            <person name="Terry A."/>
            <person name="Salamov A."/>
            <person name="Shapiro H."/>
            <person name="Nishiyama T."/>
            <person name="Perroud P.-F."/>
            <person name="Lindquist E.A."/>
            <person name="Kamisugi Y."/>
            <person name="Tanahashi T."/>
            <person name="Sakakibara K."/>
            <person name="Fujita T."/>
            <person name="Oishi K."/>
            <person name="Shin-I T."/>
            <person name="Kuroki Y."/>
            <person name="Toyoda A."/>
            <person name="Suzuki Y."/>
            <person name="Hashimoto S.-I."/>
            <person name="Yamaguchi K."/>
            <person name="Sugano S."/>
            <person name="Kohara Y."/>
            <person name="Fujiyama A."/>
            <person name="Anterola A."/>
            <person name="Aoki S."/>
            <person name="Ashton N."/>
            <person name="Barbazuk W.B."/>
            <person name="Barker E."/>
            <person name="Bennetzen J.L."/>
            <person name="Blankenship R."/>
            <person name="Cho S.H."/>
            <person name="Dutcher S.K."/>
            <person name="Estelle M."/>
            <person name="Fawcett J.A."/>
            <person name="Gundlach H."/>
            <person name="Hanada K."/>
            <person name="Heyl A."/>
            <person name="Hicks K.A."/>
            <person name="Hughes J."/>
            <person name="Lohr M."/>
            <person name="Mayer K."/>
            <person name="Melkozernov A."/>
            <person name="Murata T."/>
            <person name="Nelson D.R."/>
            <person name="Pils B."/>
            <person name="Prigge M."/>
            <person name="Reiss B."/>
            <person name="Renner T."/>
            <person name="Rombauts S."/>
            <person name="Rushton P.J."/>
            <person name="Sanderfoot A."/>
            <person name="Schween G."/>
            <person name="Shiu S.-H."/>
            <person name="Stueber K."/>
            <person name="Theodoulou F.L."/>
            <person name="Tu H."/>
            <person name="Van de Peer Y."/>
            <person name="Verrier P.J."/>
            <person name="Waters E."/>
            <person name="Wood A."/>
            <person name="Yang L."/>
            <person name="Cove D."/>
            <person name="Cuming A.C."/>
            <person name="Hasebe M."/>
            <person name="Lucas S."/>
            <person name="Mishler B.D."/>
            <person name="Reski R."/>
            <person name="Grigoriev I.V."/>
            <person name="Quatrano R.S."/>
            <person name="Boore J.L."/>
        </authorList>
    </citation>
    <scope>NUCLEOTIDE SEQUENCE [LARGE SCALE GENOMIC DNA]</scope>
    <source>
        <strain>cv. Gransden 2004</strain>
    </source>
</reference>
<reference key="2">
    <citation type="submission" date="2008-09" db="EMBL/GenBank/DDBJ databases">
        <title>Expressed genes in Physcomitrella patens.</title>
        <authorList>
            <person name="Hasebe M."/>
            <person name="Nishiyama T."/>
            <person name="Suzuki Y."/>
            <person name="Sugano S."/>
            <person name="Hiwatashi Y."/>
            <person name="Kohara Y."/>
            <person name="Shin-i T."/>
        </authorList>
    </citation>
    <scope>NUCLEOTIDE SEQUENCE [LARGE SCALE MRNA] OF 5-200</scope>
    <source>
        <strain>cv. Gransden 2004</strain>
        <tissue>Gametangium</tissue>
    </source>
</reference>
<reference key="3">
    <citation type="journal article" date="2014" name="Plant Physiol.">
        <title>Functional and evolutionary analysis of the CASPARIAN STRIP MEMBRANE DOMAIN PROTEIN family.</title>
        <authorList>
            <person name="Roppolo D."/>
            <person name="Boeckmann B."/>
            <person name="Pfister A."/>
            <person name="Boutet E."/>
            <person name="Rubio M.C."/>
            <person name="Denervaud-Tendon V."/>
            <person name="Vermeer J.E."/>
            <person name="Gheyselinck J."/>
            <person name="Xenarios I."/>
            <person name="Geldner N."/>
        </authorList>
    </citation>
    <scope>GENE FAMILY</scope>
    <scope>NOMENCLATURE</scope>
</reference>
<evidence type="ECO:0000250" key="1"/>
<evidence type="ECO:0000255" key="2"/>
<evidence type="ECO:0000305" key="3"/>
<proteinExistence type="evidence at transcript level"/>
<comment type="subunit">
    <text evidence="1">Homodimer and heterodimers.</text>
</comment>
<comment type="subcellular location">
    <subcellularLocation>
        <location evidence="1">Cell membrane</location>
        <topology evidence="1">Multi-pass membrane protein</topology>
    </subcellularLocation>
</comment>
<comment type="similarity">
    <text evidence="3">Belongs to the Casparian strip membrane proteins (CASP) family.</text>
</comment>